<reference key="1">
    <citation type="journal article" date="1996" name="FEBS Lett.">
        <title>Isolation of a novel gene down-regulated by v-src.</title>
        <authorList>
            <person name="Pan J."/>
            <person name="Nakanishi K."/>
            <person name="Yutsudo M."/>
            <person name="Inoue H."/>
            <person name="Li Q."/>
            <person name="Oka K."/>
            <person name="Yoshioka N."/>
            <person name="Hakura A."/>
        </authorList>
    </citation>
    <scope>NUCLEOTIDE SEQUENCE [MRNA] (ISOFORM 1)</scope>
    <source>
        <strain>Fischer</strain>
        <tissue>Embryonic fibroblast</tissue>
    </source>
</reference>
<reference key="2">
    <citation type="journal article" date="2004" name="Genome Res.">
        <title>The status, quality, and expansion of the NIH full-length cDNA project: the Mammalian Gene Collection (MGC).</title>
        <authorList>
            <consortium name="The MGC Project Team"/>
        </authorList>
    </citation>
    <scope>NUCLEOTIDE SEQUENCE [LARGE SCALE MRNA] (ISOFORM 2)</scope>
    <source>
        <tissue>Ovary</tissue>
    </source>
</reference>
<feature type="signal peptide" evidence="2">
    <location>
        <begin position="1"/>
        <end position="28"/>
    </location>
</feature>
<feature type="chain" id="PRO_0000022418" description="Sushi repeat-containing protein SRPX">
    <location>
        <begin position="29"/>
        <end position="464"/>
    </location>
</feature>
<feature type="domain" description="Sushi 1" evidence="4">
    <location>
        <begin position="57"/>
        <end position="117"/>
    </location>
</feature>
<feature type="domain" description="Sushi 2" evidence="4">
    <location>
        <begin position="118"/>
        <end position="176"/>
    </location>
</feature>
<feature type="domain" description="HYR" evidence="3">
    <location>
        <begin position="177"/>
        <end position="259"/>
    </location>
</feature>
<feature type="domain" description="Sushi 3" evidence="4">
    <location>
        <begin position="260"/>
        <end position="319"/>
    </location>
</feature>
<feature type="glycosylation site" description="O-linked (Xyl...) (chondroitin sulfate) serine" evidence="1">
    <location>
        <position position="34"/>
    </location>
</feature>
<feature type="disulfide bond" evidence="4">
    <location>
        <begin position="57"/>
        <end position="85"/>
    </location>
</feature>
<feature type="disulfide bond" evidence="4">
    <location>
        <begin position="69"/>
        <end position="103"/>
    </location>
</feature>
<feature type="disulfide bond" evidence="4">
    <location>
        <begin position="89"/>
        <end position="115"/>
    </location>
</feature>
<feature type="disulfide bond" evidence="4">
    <location>
        <begin position="120"/>
        <end position="161"/>
    </location>
</feature>
<feature type="disulfide bond" evidence="4">
    <location>
        <begin position="147"/>
        <end position="174"/>
    </location>
</feature>
<feature type="disulfide bond" evidence="4">
    <location>
        <begin position="262"/>
        <end position="304"/>
    </location>
</feature>
<feature type="disulfide bond" evidence="4">
    <location>
        <begin position="290"/>
        <end position="317"/>
    </location>
</feature>
<feature type="splice variant" id="VSP_014017" description="In isoform 2." evidence="5">
    <location>
        <begin position="33"/>
        <end position="52"/>
    </location>
</feature>
<comment type="alternative products">
    <event type="alternative splicing"/>
    <isoform>
        <id>Q63769-1</id>
        <name>1</name>
        <sequence type="displayed"/>
    </isoform>
    <isoform>
        <id>Q63769-2</id>
        <name>2</name>
        <sequence type="described" ref="VSP_014017"/>
    </isoform>
</comment>
<comment type="tissue specificity">
    <text>Normal cells and cells transformed by human papillomavirus type 16 E6E7 and polyomavirus large T. Suppressed in cells transformed by oncogenes such as V-SRC, V-ABL, V-FPS, V-MOS, V-SIS, V-K-RAS, and polyomavirus middle T.</text>
</comment>
<gene>
    <name type="primary">Srpx</name>
    <name type="synonym">Drs</name>
</gene>
<name>SRPX_RAT</name>
<evidence type="ECO:0000250" key="1">
    <source>
        <dbReference type="UniProtKB" id="P78539"/>
    </source>
</evidence>
<evidence type="ECO:0000255" key="2"/>
<evidence type="ECO:0000255" key="3">
    <source>
        <dbReference type="PROSITE-ProRule" id="PRU00113"/>
    </source>
</evidence>
<evidence type="ECO:0000255" key="4">
    <source>
        <dbReference type="PROSITE-ProRule" id="PRU00302"/>
    </source>
</evidence>
<evidence type="ECO:0000303" key="5">
    <source>
    </source>
</evidence>
<keyword id="KW-0025">Alternative splicing</keyword>
<keyword id="KW-1015">Disulfide bond</keyword>
<keyword id="KW-0325">Glycoprotein</keyword>
<keyword id="KW-0654">Proteoglycan</keyword>
<keyword id="KW-1185">Reference proteome</keyword>
<keyword id="KW-0677">Repeat</keyword>
<keyword id="KW-0732">Signal</keyword>
<keyword id="KW-0768">Sushi</keyword>
<sequence length="464" mass="51560">MGSPGLRPTLLLPQVLLLLLALLHVPPSQGFPGSGDSPLEDDGVWSSHSLYKDTPWCSPIKVKYGDVYCRAPPGGYYKTALGTRCDIRCRKGYELHGSSQLVCQSNRRWSDKVICKQKRCPTLTMPANGGFKCVDGAYFNSRCEYYCSPGYTLKGERTVTCMDNKAWSGRPASCVDMEPPRIKCPSVKERIAEPNKLTVRVSWETPEGRDTADGILTDVILRGLPPGSNFPEGDHKIEYTVYDRAENKGTCKFRVKVRVRRCGKLNAPENGYMKCSSDGDNYGATCEFSCIGGYELQGSPARVCQSNLAWSGTEPSCAAMNVNVGVRTAAALLDQFYEKRRLLIVSTPTARNLLYRLQLGMLQQAQCGLDLRHITVVELVGVFPTLIGRIRAKIMPPALALQLRLLLRIPLYSFSMVLVDKHGMDKERYVSLVTPMALFNLIDTFPLRKEEMILQAEMGQSCNT</sequence>
<dbReference type="EMBL" id="D78359">
    <property type="protein sequence ID" value="BAA11371.1"/>
    <property type="molecule type" value="mRNA"/>
</dbReference>
<dbReference type="EMBL" id="BC087639">
    <property type="protein sequence ID" value="AAH87639.1"/>
    <property type="molecule type" value="mRNA"/>
</dbReference>
<dbReference type="RefSeq" id="NP_071969.1">
    <molecule id="Q63769-1"/>
    <property type="nucleotide sequence ID" value="NM_022524.2"/>
</dbReference>
<dbReference type="RefSeq" id="XP_006256745.1">
    <molecule id="Q63769-2"/>
    <property type="nucleotide sequence ID" value="XM_006256683.5"/>
</dbReference>
<dbReference type="FunCoup" id="Q63769">
    <property type="interactions" value="104"/>
</dbReference>
<dbReference type="STRING" id="10116.ENSRNOP00000048924"/>
<dbReference type="GlyGen" id="Q63769">
    <property type="glycosylation" value="1 site"/>
</dbReference>
<dbReference type="PhosphoSitePlus" id="Q63769"/>
<dbReference type="PaxDb" id="10116-ENSRNOP00000048924"/>
<dbReference type="Ensembl" id="ENSRNOT00000045753.3">
    <molecule id="Q63769-1"/>
    <property type="protein sequence ID" value="ENSRNOP00000048924.2"/>
    <property type="gene ID" value="ENSRNOG00000003013.7"/>
</dbReference>
<dbReference type="Ensembl" id="ENSRNOT00000114608.1">
    <molecule id="Q63769-2"/>
    <property type="protein sequence ID" value="ENSRNOP00000083955.1"/>
    <property type="gene ID" value="ENSRNOG00000003013.7"/>
</dbReference>
<dbReference type="GeneID" id="64316"/>
<dbReference type="KEGG" id="rno:64316"/>
<dbReference type="UCSC" id="RGD:70950">
    <molecule id="Q63769-1"/>
    <property type="organism name" value="rat"/>
</dbReference>
<dbReference type="AGR" id="RGD:70950"/>
<dbReference type="CTD" id="8406"/>
<dbReference type="RGD" id="70950">
    <property type="gene designation" value="Srpx"/>
</dbReference>
<dbReference type="eggNOG" id="ENOG502QVU2">
    <property type="taxonomic scope" value="Eukaryota"/>
</dbReference>
<dbReference type="GeneTree" id="ENSGT00940000159616"/>
<dbReference type="HOGENOM" id="CLU_047011_0_0_1"/>
<dbReference type="InParanoid" id="Q63769"/>
<dbReference type="OrthoDB" id="27557at9989"/>
<dbReference type="PhylomeDB" id="Q63769"/>
<dbReference type="TreeFam" id="TF336515"/>
<dbReference type="PRO" id="PR:Q63769"/>
<dbReference type="Proteomes" id="UP000002494">
    <property type="component" value="Chromosome X"/>
</dbReference>
<dbReference type="Bgee" id="ENSRNOG00000039666">
    <property type="expression patterns" value="Expressed in esophagus and 18 other cell types or tissues"/>
</dbReference>
<dbReference type="GO" id="GO:0005776">
    <property type="term" value="C:autophagosome"/>
    <property type="evidence" value="ECO:0000266"/>
    <property type="project" value="RGD"/>
</dbReference>
<dbReference type="GO" id="GO:0005783">
    <property type="term" value="C:endoplasmic reticulum"/>
    <property type="evidence" value="ECO:0000266"/>
    <property type="project" value="RGD"/>
</dbReference>
<dbReference type="GO" id="GO:0006914">
    <property type="term" value="P:autophagy"/>
    <property type="evidence" value="ECO:0000266"/>
    <property type="project" value="RGD"/>
</dbReference>
<dbReference type="GO" id="GO:0060244">
    <property type="term" value="P:negative regulation of cell proliferation involved in contact inhibition"/>
    <property type="evidence" value="ECO:0000266"/>
    <property type="project" value="RGD"/>
</dbReference>
<dbReference type="GO" id="GO:0001845">
    <property type="term" value="P:phagolysosome assembly"/>
    <property type="evidence" value="ECO:0000266"/>
    <property type="project" value="RGD"/>
</dbReference>
<dbReference type="GO" id="GO:2001241">
    <property type="term" value="P:positive regulation of extrinsic apoptotic signaling pathway in absence of ligand"/>
    <property type="evidence" value="ECO:0000266"/>
    <property type="project" value="RGD"/>
</dbReference>
<dbReference type="GO" id="GO:0034976">
    <property type="term" value="P:response to endoplasmic reticulum stress"/>
    <property type="evidence" value="ECO:0000266"/>
    <property type="project" value="RGD"/>
</dbReference>
<dbReference type="CDD" id="cd00033">
    <property type="entry name" value="CCP"/>
    <property type="match status" value="3"/>
</dbReference>
<dbReference type="FunFam" id="2.10.70.10:FF:000024">
    <property type="entry name" value="Sushi repeat-containing protein SRPX"/>
    <property type="match status" value="1"/>
</dbReference>
<dbReference type="FunFam" id="2.10.70.10:FF:000032">
    <property type="entry name" value="sushi repeat-containing protein SRPX isoform X1"/>
    <property type="match status" value="1"/>
</dbReference>
<dbReference type="Gene3D" id="2.10.70.10">
    <property type="entry name" value="Complement Module, domain 1"/>
    <property type="match status" value="3"/>
</dbReference>
<dbReference type="InterPro" id="IPR025232">
    <property type="entry name" value="DUF4174"/>
</dbReference>
<dbReference type="InterPro" id="IPR003410">
    <property type="entry name" value="HYR_dom"/>
</dbReference>
<dbReference type="InterPro" id="IPR043555">
    <property type="entry name" value="SRPX-like"/>
</dbReference>
<dbReference type="InterPro" id="IPR035976">
    <property type="entry name" value="Sushi/SCR/CCP_sf"/>
</dbReference>
<dbReference type="InterPro" id="IPR000436">
    <property type="entry name" value="Sushi_SCR_CCP_dom"/>
</dbReference>
<dbReference type="PANTHER" id="PTHR46343">
    <property type="entry name" value="HYR DOMAIN-CONTAINING PROTEIN"/>
    <property type="match status" value="1"/>
</dbReference>
<dbReference type="PANTHER" id="PTHR46343:SF1">
    <property type="entry name" value="SUSHI REPEAT-CONTAINING PROTEIN SRPX"/>
    <property type="match status" value="1"/>
</dbReference>
<dbReference type="Pfam" id="PF13778">
    <property type="entry name" value="DUF4174"/>
    <property type="match status" value="1"/>
</dbReference>
<dbReference type="Pfam" id="PF02494">
    <property type="entry name" value="HYR"/>
    <property type="match status" value="1"/>
</dbReference>
<dbReference type="Pfam" id="PF00084">
    <property type="entry name" value="Sushi"/>
    <property type="match status" value="3"/>
</dbReference>
<dbReference type="SMART" id="SM00032">
    <property type="entry name" value="CCP"/>
    <property type="match status" value="3"/>
</dbReference>
<dbReference type="SUPFAM" id="SSF57535">
    <property type="entry name" value="Complement control module/SCR domain"/>
    <property type="match status" value="3"/>
</dbReference>
<dbReference type="PROSITE" id="PS50825">
    <property type="entry name" value="HYR"/>
    <property type="match status" value="1"/>
</dbReference>
<dbReference type="PROSITE" id="PS50923">
    <property type="entry name" value="SUSHI"/>
    <property type="match status" value="3"/>
</dbReference>
<accession>Q63769</accession>
<accession>Q5PPK5</accession>
<organism>
    <name type="scientific">Rattus norvegicus</name>
    <name type="common">Rat</name>
    <dbReference type="NCBI Taxonomy" id="10116"/>
    <lineage>
        <taxon>Eukaryota</taxon>
        <taxon>Metazoa</taxon>
        <taxon>Chordata</taxon>
        <taxon>Craniata</taxon>
        <taxon>Vertebrata</taxon>
        <taxon>Euteleostomi</taxon>
        <taxon>Mammalia</taxon>
        <taxon>Eutheria</taxon>
        <taxon>Euarchontoglires</taxon>
        <taxon>Glires</taxon>
        <taxon>Rodentia</taxon>
        <taxon>Myomorpha</taxon>
        <taxon>Muroidea</taxon>
        <taxon>Muridae</taxon>
        <taxon>Murinae</taxon>
        <taxon>Rattus</taxon>
    </lineage>
</organism>
<protein>
    <recommendedName>
        <fullName>Sushi repeat-containing protein SRPX</fullName>
    </recommendedName>
    <alternativeName>
        <fullName>Down-regulated by v-SRC</fullName>
        <shortName>DRS</shortName>
    </alternativeName>
</protein>
<proteinExistence type="evidence at transcript level"/>